<dbReference type="EMBL" id="JQ088099">
    <property type="protein sequence ID" value="AFC36404.1"/>
    <property type="molecule type" value="Genomic_DNA"/>
</dbReference>
<dbReference type="SMR" id="H9BZ66"/>
<dbReference type="TCDB" id="3.A.1.204.23">
    <property type="family name" value="the atp-binding cassette (abc) superfamily"/>
</dbReference>
<dbReference type="GlyCosmos" id="H9BZ66">
    <property type="glycosylation" value="1 site, No reported glycans"/>
</dbReference>
<dbReference type="GO" id="GO:0005886">
    <property type="term" value="C:plasma membrane"/>
    <property type="evidence" value="ECO:0000314"/>
    <property type="project" value="UniProtKB"/>
</dbReference>
<dbReference type="GO" id="GO:0140359">
    <property type="term" value="F:ABC-type transporter activity"/>
    <property type="evidence" value="ECO:0000315"/>
    <property type="project" value="UniProtKB"/>
</dbReference>
<dbReference type="GO" id="GO:0005524">
    <property type="term" value="F:ATP binding"/>
    <property type="evidence" value="ECO:0007669"/>
    <property type="project" value="UniProtKB-KW"/>
</dbReference>
<dbReference type="GO" id="GO:0016887">
    <property type="term" value="F:ATP hydrolysis activity"/>
    <property type="evidence" value="ECO:0007669"/>
    <property type="project" value="InterPro"/>
</dbReference>
<dbReference type="GO" id="GO:0010597">
    <property type="term" value="P:green leaf volatile biosynthetic process"/>
    <property type="evidence" value="ECO:0000314"/>
    <property type="project" value="UniProtKB"/>
</dbReference>
<dbReference type="GO" id="GO:0055085">
    <property type="term" value="P:transmembrane transport"/>
    <property type="evidence" value="ECO:0000315"/>
    <property type="project" value="UniProtKB"/>
</dbReference>
<dbReference type="CDD" id="cd03213">
    <property type="entry name" value="ABCG_EPDR"/>
    <property type="match status" value="1"/>
</dbReference>
<dbReference type="FunFam" id="3.40.50.300:FF:001533">
    <property type="entry name" value="ABC transporter G family member 11"/>
    <property type="match status" value="1"/>
</dbReference>
<dbReference type="Gene3D" id="3.40.50.300">
    <property type="entry name" value="P-loop containing nucleotide triphosphate hydrolases"/>
    <property type="match status" value="1"/>
</dbReference>
<dbReference type="InterPro" id="IPR003593">
    <property type="entry name" value="AAA+_ATPase"/>
</dbReference>
<dbReference type="InterPro" id="IPR013525">
    <property type="entry name" value="ABC2_TM"/>
</dbReference>
<dbReference type="InterPro" id="IPR003439">
    <property type="entry name" value="ABC_transporter-like_ATP-bd"/>
</dbReference>
<dbReference type="InterPro" id="IPR017871">
    <property type="entry name" value="ABC_transporter-like_CS"/>
</dbReference>
<dbReference type="InterPro" id="IPR043926">
    <property type="entry name" value="ABCG_dom"/>
</dbReference>
<dbReference type="InterPro" id="IPR027417">
    <property type="entry name" value="P-loop_NTPase"/>
</dbReference>
<dbReference type="InterPro" id="IPR052215">
    <property type="entry name" value="Plant_ABCG"/>
</dbReference>
<dbReference type="PANTHER" id="PTHR48042">
    <property type="entry name" value="ABC TRANSPORTER G FAMILY MEMBER 11"/>
    <property type="match status" value="1"/>
</dbReference>
<dbReference type="PANTHER" id="PTHR48042:SF1">
    <property type="entry name" value="ABC TRANSPORTER G FAMILY MEMBER 11-LIKE"/>
    <property type="match status" value="1"/>
</dbReference>
<dbReference type="Pfam" id="PF01061">
    <property type="entry name" value="ABC2_membrane"/>
    <property type="match status" value="1"/>
</dbReference>
<dbReference type="Pfam" id="PF19055">
    <property type="entry name" value="ABC2_membrane_7"/>
    <property type="match status" value="1"/>
</dbReference>
<dbReference type="Pfam" id="PF00005">
    <property type="entry name" value="ABC_tran"/>
    <property type="match status" value="1"/>
</dbReference>
<dbReference type="SMART" id="SM00382">
    <property type="entry name" value="AAA"/>
    <property type="match status" value="1"/>
</dbReference>
<dbReference type="SUPFAM" id="SSF52540">
    <property type="entry name" value="P-loop containing nucleoside triphosphate hydrolases"/>
    <property type="match status" value="1"/>
</dbReference>
<dbReference type="PROSITE" id="PS00211">
    <property type="entry name" value="ABC_TRANSPORTER_1"/>
    <property type="match status" value="1"/>
</dbReference>
<dbReference type="PROSITE" id="PS50893">
    <property type="entry name" value="ABC_TRANSPORTER_2"/>
    <property type="match status" value="1"/>
</dbReference>
<comment type="function">
    <text evidence="6 7">ABC transporter controlling the release of volatile organic compounds (VOCs), including floral volatile benzenoids and phenylpropanoids (FVBP), in flowers of fragrant cultivars (e.g. cv. Mitchell and cv. V26) (PubMed:22345641, PubMed:28663500). This scent, mostly produced in the evening and night by the petals, attracts the pollinators (e.g. the night-active hawkmoth pollinator Manduca sexta) (PubMed:22345641).</text>
</comment>
<comment type="subunit">
    <text evidence="1">Homodimer.</text>
</comment>
<comment type="subcellular location">
    <subcellularLocation>
        <location evidence="6">Cell membrane</location>
        <topology evidence="2">Multi-pass membrane protein</topology>
    </subcellularLocation>
</comment>
<comment type="tissue specificity">
    <text evidence="6">Restricted to the petals, with the highest expression in the limb and, to a lesser extent, in petal tubes, probably in both epidermal and mesophyll cell layers.</text>
</comment>
<comment type="developmental stage">
    <text evidence="6">Accumulates during flower development with highest levels in open flowers, and fades out as flowers are senescing.</text>
</comment>
<comment type="induction">
    <text evidence="6">In fragrant cultivars (e.g. cv. Mitchell and cv. V26), increases before the onset of volatile emission at the end of the light period, peaks at night and decreases when volatile emission declines early morning; this precise regulation is tuned by ODO1 binding and activation of its promoter.</text>
</comment>
<comment type="disruption phenotype">
    <text evidence="7">Disturbed release of volatile organic compounds (VOCs) in flowers, including benzoides and phenylpropanoids, which accumulate to toxic levels in the plasma membrane.</text>
</comment>
<comment type="similarity">
    <text evidence="5">Belongs to the ABC transporter superfamily. ABCG family.</text>
</comment>
<evidence type="ECO:0000250" key="1">
    <source>
        <dbReference type="UniProtKB" id="Q8RXN0"/>
    </source>
</evidence>
<evidence type="ECO:0000255" key="2"/>
<evidence type="ECO:0000255" key="3">
    <source>
        <dbReference type="PROSITE-ProRule" id="PRU00434"/>
    </source>
</evidence>
<evidence type="ECO:0000255" key="4">
    <source>
        <dbReference type="PROSITE-ProRule" id="PRU00498"/>
    </source>
</evidence>
<evidence type="ECO:0000255" key="5">
    <source>
        <dbReference type="PROSITE-ProRule" id="PRU01700"/>
    </source>
</evidence>
<evidence type="ECO:0000269" key="6">
    <source>
    </source>
</evidence>
<evidence type="ECO:0000269" key="7">
    <source>
    </source>
</evidence>
<evidence type="ECO:0000303" key="8">
    <source>
    </source>
</evidence>
<sequence>MTNQLPNKVELAEVVPQNGGVFLTWEDLWVTASSVKDGSKAILKGLTGYAMPGELLAIMGPSGSGKSTLLDTIAGRLGSSTRQSGDILINGRRQTLAYGSSAYVTQDDTLLATLTIKEAVYYSAELQLPNSMSKSEKKEIADVTLKGMGLQDAMETRIGGWSGKGISGGQKRRVSICLEILTRPKLLFLDEPTSGLDSAASYYVMKAIASQCQGRTIIASIHQPSVDVFSLFHSLCLLSSGRTVYFGPASAANEFFALSGFPCPTLQNPSDHFLKTINSDFDQDIEEGSTRRKSTEEVIDILIKSYKASDKYNAVQSQVAEICQQEGEMLDKRSHASFITQSLVLTRRSFINMSRDLGYYWLRLAVYVVIAVGLGSLYYDVGFSAASVQARGSMLMFVASFITFMAIGGFPSFVEDMKVFQREKLNGHYGSGSFVIANTLSAMPYLLLVSLIPGAIAYFMTGLQNGFEHFIYFALVLFTCMMIVESLMMIVASMVPNFLMGLIAGAGIQALMLLSGGFFRLPNDLPKPFWKYPLHYVAFHKYAYEGMFKNEFEGLKIHDVNGEDILRNTWQMNMDYSKWIDLVILLGMLVLYRVLFLLVVKAGEIVKPAIRAFMSHSPNQINSAERPLDVFDS</sequence>
<feature type="chain" id="PRO_0000451493" description="ABC transporter G family member 1">
    <location>
        <begin position="1"/>
        <end position="633"/>
    </location>
</feature>
<feature type="transmembrane region" description="Helical" evidence="2">
    <location>
        <begin position="364"/>
        <end position="384"/>
    </location>
</feature>
<feature type="transmembrane region" description="Helical" evidence="2">
    <location>
        <begin position="394"/>
        <end position="414"/>
    </location>
</feature>
<feature type="transmembrane region" description="Helical" evidence="2">
    <location>
        <begin position="440"/>
        <end position="460"/>
    </location>
</feature>
<feature type="transmembrane region" description="Helical" evidence="2">
    <location>
        <begin position="470"/>
        <end position="490"/>
    </location>
</feature>
<feature type="transmembrane region" description="Helical" evidence="2">
    <location>
        <begin position="498"/>
        <end position="518"/>
    </location>
</feature>
<feature type="transmembrane region" description="Helical" evidence="2">
    <location>
        <begin position="580"/>
        <end position="600"/>
    </location>
</feature>
<feature type="domain" description="ABC transporter" evidence="3">
    <location>
        <begin position="23"/>
        <end position="265"/>
    </location>
</feature>
<feature type="domain" description="ABC transmembrane type-2" evidence="2">
    <location>
        <begin position="340"/>
        <end position="552"/>
    </location>
</feature>
<feature type="binding site" evidence="3">
    <location>
        <begin position="60"/>
        <end position="67"/>
    </location>
    <ligand>
        <name>ATP</name>
        <dbReference type="ChEBI" id="CHEBI:30616"/>
    </ligand>
</feature>
<feature type="glycosylation site" description="N-linked (GlcNAc...) asparagine" evidence="4">
    <location>
        <position position="352"/>
    </location>
</feature>
<organism>
    <name type="scientific">Petunia hybrida</name>
    <name type="common">Petunia</name>
    <dbReference type="NCBI Taxonomy" id="4102"/>
    <lineage>
        <taxon>Eukaryota</taxon>
        <taxon>Viridiplantae</taxon>
        <taxon>Streptophyta</taxon>
        <taxon>Embryophyta</taxon>
        <taxon>Tracheophyta</taxon>
        <taxon>Spermatophyta</taxon>
        <taxon>Magnoliopsida</taxon>
        <taxon>eudicotyledons</taxon>
        <taxon>Gunneridae</taxon>
        <taxon>Pentapetalae</taxon>
        <taxon>asterids</taxon>
        <taxon>lamiids</taxon>
        <taxon>Solanales</taxon>
        <taxon>Solanaceae</taxon>
        <taxon>Petunioideae</taxon>
        <taxon>Petunia</taxon>
    </lineage>
</organism>
<accession>H9BZ66</accession>
<proteinExistence type="evidence at transcript level"/>
<reference key="1">
    <citation type="journal article" date="2012" name="J. Exp. Bot.">
        <title>Regulators of floral fragrance production and their target genes in petunia are not exclusively active in the epidermal cells of petals.</title>
        <authorList>
            <person name="Van Moerkercke A."/>
            <person name="Galvan-Ampudia C.S."/>
            <person name="Verdonk J.C."/>
            <person name="Haring M.A."/>
            <person name="Schuurink R.C."/>
        </authorList>
    </citation>
    <scope>NUCLEOTIDE SEQUENCE [GENOMIC DNA]</scope>
    <scope>FUNCTION</scope>
    <scope>SUBCELLULAR LOCATION</scope>
    <scope>INDUCTION BY ODO1</scope>
    <scope>TISSUE SPECIFICITY</scope>
    <scope>DEVELOPMENTAL STAGE</scope>
    <source>
        <strain>cv. Mitchell</strain>
        <strain>cv. R27</strain>
    </source>
</reference>
<reference key="2">
    <citation type="journal article" date="2017" name="Science">
        <title>Emission of volatile organic compounds from petunia flowers is facilitated by an ABC transporter.</title>
        <authorList>
            <person name="Adebesin F."/>
            <person name="Widhalm J.R."/>
            <person name="Boachon B."/>
            <person name="Lefevre F."/>
            <person name="Pierman B."/>
            <person name="Lynch J.H."/>
            <person name="Alam I."/>
            <person name="Junqueira B."/>
            <person name="Benke R."/>
            <person name="Ray S."/>
            <person name="Porter J.A."/>
            <person name="Yanagisawa M."/>
            <person name="Wetzstein H.Y."/>
            <person name="Morgan J.A."/>
            <person name="Boutry M."/>
            <person name="Schuurink R.C."/>
            <person name="Dudareva N."/>
        </authorList>
    </citation>
    <scope>FUNCTION</scope>
    <scope>DISRUPTION PHENOTYPE</scope>
</reference>
<keyword id="KW-0067">ATP-binding</keyword>
<keyword id="KW-1003">Cell membrane</keyword>
<keyword id="KW-0325">Glycoprotein</keyword>
<keyword id="KW-0472">Membrane</keyword>
<keyword id="KW-0547">Nucleotide-binding</keyword>
<keyword id="KW-0812">Transmembrane</keyword>
<keyword id="KW-1133">Transmembrane helix</keyword>
<keyword id="KW-0813">Transport</keyword>
<name>ABCG1_PETHY</name>
<protein>
    <recommendedName>
        <fullName evidence="8">ABC transporter G family member 1</fullName>
        <shortName evidence="8">ABC transporter ABCG.1</shortName>
        <shortName evidence="8">PhABCG1</shortName>
    </recommendedName>
</protein>
<gene>
    <name evidence="8" type="primary">ABCG1</name>
</gene>